<reference key="1">
    <citation type="submission" date="2006-12" db="EMBL/GenBank/DDBJ databases">
        <title>Complete sequence of Shewanella amazonensis SB2B.</title>
        <authorList>
            <consortium name="US DOE Joint Genome Institute"/>
            <person name="Copeland A."/>
            <person name="Lucas S."/>
            <person name="Lapidus A."/>
            <person name="Barry K."/>
            <person name="Detter J.C."/>
            <person name="Glavina del Rio T."/>
            <person name="Hammon N."/>
            <person name="Israni S."/>
            <person name="Dalin E."/>
            <person name="Tice H."/>
            <person name="Pitluck S."/>
            <person name="Munk A.C."/>
            <person name="Brettin T."/>
            <person name="Bruce D."/>
            <person name="Han C."/>
            <person name="Tapia R."/>
            <person name="Gilna P."/>
            <person name="Schmutz J."/>
            <person name="Larimer F."/>
            <person name="Land M."/>
            <person name="Hauser L."/>
            <person name="Kyrpides N."/>
            <person name="Mikhailova N."/>
            <person name="Fredrickson J."/>
            <person name="Richardson P."/>
        </authorList>
    </citation>
    <scope>NUCLEOTIDE SEQUENCE [LARGE SCALE GENOMIC DNA]</scope>
    <source>
        <strain>ATCC BAA-1098 / SB2B</strain>
    </source>
</reference>
<sequence length="248" mass="27288">MFPIQIAPNDPRLTQICARWDLTPNDNAEFSLLFEEDILTLKKRDEPKLGGIMVDFVSGAVAHRRKFGGGRGQAIAKAVGLKAGATPTVVDGTAGLGRDAFVLASLGCRVLLIERHPVVAALLEDGLRRAYLDGEIGPWMQQRMQLVHGSSLEALDNLEDKPDVVYLDPMYPHREKSALVKKEMRVFQSLVGADTDADGLLAPALRLAQKRVVVKRPDYAEDLDGVRPSTRIETKKNRFDVYVKAAMG</sequence>
<evidence type="ECO:0000255" key="1">
    <source>
        <dbReference type="HAMAP-Rule" id="MF_01523"/>
    </source>
</evidence>
<name>RSMJ_SHEAM</name>
<comment type="function">
    <text evidence="1">Specifically methylates the guanosine in position 1516 of 16S rRNA.</text>
</comment>
<comment type="catalytic activity">
    <reaction evidence="1">
        <text>guanosine(1516) in 16S rRNA + S-adenosyl-L-methionine = N(2)-methylguanosine(1516) in 16S rRNA + S-adenosyl-L-homocysteine + H(+)</text>
        <dbReference type="Rhea" id="RHEA:43220"/>
        <dbReference type="Rhea" id="RHEA-COMP:10412"/>
        <dbReference type="Rhea" id="RHEA-COMP:10413"/>
        <dbReference type="ChEBI" id="CHEBI:15378"/>
        <dbReference type="ChEBI" id="CHEBI:57856"/>
        <dbReference type="ChEBI" id="CHEBI:59789"/>
        <dbReference type="ChEBI" id="CHEBI:74269"/>
        <dbReference type="ChEBI" id="CHEBI:74481"/>
        <dbReference type="EC" id="2.1.1.242"/>
    </reaction>
</comment>
<comment type="subcellular location">
    <subcellularLocation>
        <location evidence="1">Cytoplasm</location>
    </subcellularLocation>
</comment>
<comment type="similarity">
    <text evidence="1">Belongs to the methyltransferase superfamily. RsmJ family.</text>
</comment>
<keyword id="KW-0963">Cytoplasm</keyword>
<keyword id="KW-0489">Methyltransferase</keyword>
<keyword id="KW-1185">Reference proteome</keyword>
<keyword id="KW-0698">rRNA processing</keyword>
<keyword id="KW-0949">S-adenosyl-L-methionine</keyword>
<keyword id="KW-0808">Transferase</keyword>
<dbReference type="EC" id="2.1.1.242" evidence="1"/>
<dbReference type="EMBL" id="CP000507">
    <property type="protein sequence ID" value="ABM01767.1"/>
    <property type="molecule type" value="Genomic_DNA"/>
</dbReference>
<dbReference type="RefSeq" id="WP_011761670.1">
    <property type="nucleotide sequence ID" value="NC_008700.1"/>
</dbReference>
<dbReference type="SMR" id="A1SBL0"/>
<dbReference type="STRING" id="326297.Sama_3564"/>
<dbReference type="KEGG" id="saz:Sama_3564"/>
<dbReference type="eggNOG" id="COG0742">
    <property type="taxonomic scope" value="Bacteria"/>
</dbReference>
<dbReference type="HOGENOM" id="CLU_076324_0_0_6"/>
<dbReference type="OrthoDB" id="3191794at2"/>
<dbReference type="Proteomes" id="UP000009175">
    <property type="component" value="Chromosome"/>
</dbReference>
<dbReference type="GO" id="GO:0005737">
    <property type="term" value="C:cytoplasm"/>
    <property type="evidence" value="ECO:0007669"/>
    <property type="project" value="UniProtKB-SubCell"/>
</dbReference>
<dbReference type="GO" id="GO:0008990">
    <property type="term" value="F:rRNA (guanine-N2-)-methyltransferase activity"/>
    <property type="evidence" value="ECO:0007669"/>
    <property type="project" value="UniProtKB-UniRule"/>
</dbReference>
<dbReference type="CDD" id="cd02440">
    <property type="entry name" value="AdoMet_MTases"/>
    <property type="match status" value="1"/>
</dbReference>
<dbReference type="Gene3D" id="3.40.50.150">
    <property type="entry name" value="Vaccinia Virus protein VP39"/>
    <property type="match status" value="1"/>
</dbReference>
<dbReference type="Gene3D" id="3.40.1630.10">
    <property type="entry name" value="YhiQ-like domain"/>
    <property type="match status" value="1"/>
</dbReference>
<dbReference type="HAMAP" id="MF_01523">
    <property type="entry name" value="16SrRNA_methyltr_J"/>
    <property type="match status" value="1"/>
</dbReference>
<dbReference type="InterPro" id="IPR007536">
    <property type="entry name" value="16SrRNA_methylTrfase_J"/>
</dbReference>
<dbReference type="InterPro" id="IPR029063">
    <property type="entry name" value="SAM-dependent_MTases_sf"/>
</dbReference>
<dbReference type="PANTHER" id="PTHR36112">
    <property type="entry name" value="RIBOSOMAL RNA SMALL SUBUNIT METHYLTRANSFERASE J"/>
    <property type="match status" value="1"/>
</dbReference>
<dbReference type="PANTHER" id="PTHR36112:SF1">
    <property type="entry name" value="RIBOSOMAL RNA SMALL SUBUNIT METHYLTRANSFERASE J"/>
    <property type="match status" value="1"/>
</dbReference>
<dbReference type="Pfam" id="PF04445">
    <property type="entry name" value="SAM_MT"/>
    <property type="match status" value="1"/>
</dbReference>
<dbReference type="SUPFAM" id="SSF53335">
    <property type="entry name" value="S-adenosyl-L-methionine-dependent methyltransferases"/>
    <property type="match status" value="1"/>
</dbReference>
<accession>A1SBL0</accession>
<feature type="chain" id="PRO_0000292643" description="Ribosomal RNA small subunit methyltransferase J">
    <location>
        <begin position="1"/>
        <end position="248"/>
    </location>
</feature>
<feature type="binding site" evidence="1">
    <location>
        <begin position="98"/>
        <end position="99"/>
    </location>
    <ligand>
        <name>S-adenosyl-L-methionine</name>
        <dbReference type="ChEBI" id="CHEBI:59789"/>
    </ligand>
</feature>
<feature type="binding site" evidence="1">
    <location>
        <begin position="114"/>
        <end position="115"/>
    </location>
    <ligand>
        <name>S-adenosyl-L-methionine</name>
        <dbReference type="ChEBI" id="CHEBI:59789"/>
    </ligand>
</feature>
<feature type="binding site" evidence="1">
    <location>
        <begin position="150"/>
        <end position="151"/>
    </location>
    <ligand>
        <name>S-adenosyl-L-methionine</name>
        <dbReference type="ChEBI" id="CHEBI:59789"/>
    </ligand>
</feature>
<feature type="binding site" evidence="1">
    <location>
        <position position="168"/>
    </location>
    <ligand>
        <name>S-adenosyl-L-methionine</name>
        <dbReference type="ChEBI" id="CHEBI:59789"/>
    </ligand>
</feature>
<proteinExistence type="inferred from homology"/>
<protein>
    <recommendedName>
        <fullName evidence="1">Ribosomal RNA small subunit methyltransferase J</fullName>
        <ecNumber evidence="1">2.1.1.242</ecNumber>
    </recommendedName>
    <alternativeName>
        <fullName evidence="1">16S rRNA m2G1516 methyltransferase</fullName>
    </alternativeName>
    <alternativeName>
        <fullName evidence="1">rRNA (guanine-N(2)-)-methyltransferase</fullName>
    </alternativeName>
</protein>
<organism>
    <name type="scientific">Shewanella amazonensis (strain ATCC BAA-1098 / SB2B)</name>
    <dbReference type="NCBI Taxonomy" id="326297"/>
    <lineage>
        <taxon>Bacteria</taxon>
        <taxon>Pseudomonadati</taxon>
        <taxon>Pseudomonadota</taxon>
        <taxon>Gammaproteobacteria</taxon>
        <taxon>Alteromonadales</taxon>
        <taxon>Shewanellaceae</taxon>
        <taxon>Shewanella</taxon>
    </lineage>
</organism>
<gene>
    <name evidence="1" type="primary">rsmJ</name>
    <name type="ordered locus">Sama_3564</name>
</gene>